<dbReference type="EC" id="2.4.99.-" evidence="5 6"/>
<dbReference type="EMBL" id="AJ507293">
    <property type="protein sequence ID" value="CAD45373.1"/>
    <property type="molecule type" value="mRNA"/>
</dbReference>
<dbReference type="EMBL" id="AB035173">
    <property type="protein sequence ID" value="BAA87035.1"/>
    <property type="molecule type" value="mRNA"/>
</dbReference>
<dbReference type="EMBL" id="AY358672">
    <property type="protein sequence ID" value="AAQ89035.1"/>
    <property type="molecule type" value="mRNA"/>
</dbReference>
<dbReference type="EMBL" id="AK023900">
    <property type="protein sequence ID" value="BAB14715.1"/>
    <property type="molecule type" value="mRNA"/>
</dbReference>
<dbReference type="EMBL" id="AK057100">
    <property type="protein sequence ID" value="BAG51863.1"/>
    <property type="molecule type" value="mRNA"/>
</dbReference>
<dbReference type="EMBL" id="CR457318">
    <property type="protein sequence ID" value="CAG33599.1"/>
    <property type="molecule type" value="mRNA"/>
</dbReference>
<dbReference type="EMBL" id="AL157935">
    <property type="status" value="NOT_ANNOTATED_CDS"/>
    <property type="molecule type" value="Genomic_DNA"/>
</dbReference>
<dbReference type="EMBL" id="CH471090">
    <property type="protein sequence ID" value="EAW87711.1"/>
    <property type="molecule type" value="Genomic_DNA"/>
</dbReference>
<dbReference type="EMBL" id="CH471090">
    <property type="protein sequence ID" value="EAW87712.1"/>
    <property type="status" value="ALT_SEQ"/>
    <property type="molecule type" value="Genomic_DNA"/>
</dbReference>
<dbReference type="EMBL" id="CH471090">
    <property type="protein sequence ID" value="EAW87714.1"/>
    <property type="molecule type" value="Genomic_DNA"/>
</dbReference>
<dbReference type="EMBL" id="BC006564">
    <property type="protein sequence ID" value="AAH06564.1"/>
    <property type="molecule type" value="mRNA"/>
</dbReference>
<dbReference type="EMBL" id="BC007802">
    <property type="protein sequence ID" value="AAH07802.1"/>
    <property type="molecule type" value="mRNA"/>
</dbReference>
<dbReference type="EMBL" id="BC016299">
    <property type="protein sequence ID" value="AAH16299.1"/>
    <property type="molecule type" value="mRNA"/>
</dbReference>
<dbReference type="EMBL" id="BC036102">
    <property type="status" value="NOT_ANNOTATED_CDS"/>
    <property type="molecule type" value="mRNA"/>
</dbReference>
<dbReference type="CCDS" id="CCDS6882.1">
    <molecule id="Q969X2-1"/>
</dbReference>
<dbReference type="CCDS" id="CCDS69668.1">
    <molecule id="Q969X2-2"/>
</dbReference>
<dbReference type="CCDS" id="CCDS69669.1">
    <molecule id="Q969X2-3"/>
</dbReference>
<dbReference type="RefSeq" id="NP_001273928.1">
    <molecule id="Q969X2-3"/>
    <property type="nucleotide sequence ID" value="NM_001286999.2"/>
</dbReference>
<dbReference type="RefSeq" id="NP_001273929.1">
    <molecule id="Q969X2-2"/>
    <property type="nucleotide sequence ID" value="NM_001287000.2"/>
</dbReference>
<dbReference type="RefSeq" id="NP_001273930.1">
    <molecule id="Q969X2-2"/>
    <property type="nucleotide sequence ID" value="NM_001287001.2"/>
</dbReference>
<dbReference type="RefSeq" id="NP_001273931.1">
    <molecule id="Q969X2-2"/>
    <property type="nucleotide sequence ID" value="NM_001287002.2"/>
</dbReference>
<dbReference type="RefSeq" id="NP_001273932.1">
    <property type="nucleotide sequence ID" value="NM_001287003.1"/>
</dbReference>
<dbReference type="RefSeq" id="NP_001375418.1">
    <molecule id="Q969X2-2"/>
    <property type="nucleotide sequence ID" value="NM_001388489.1"/>
</dbReference>
<dbReference type="RefSeq" id="NP_001387760.1">
    <molecule id="Q969X2-2"/>
    <property type="nucleotide sequence ID" value="NM_001400831.1"/>
</dbReference>
<dbReference type="RefSeq" id="NP_038471.2">
    <molecule id="Q969X2-1"/>
    <property type="nucleotide sequence ID" value="NM_013443.4"/>
</dbReference>
<dbReference type="RefSeq" id="XP_011516912.1">
    <property type="nucleotide sequence ID" value="XM_011518610.2"/>
</dbReference>
<dbReference type="RefSeq" id="XP_011516913.1">
    <property type="nucleotide sequence ID" value="XM_011518611.2"/>
</dbReference>
<dbReference type="RefSeq" id="XP_016870148.1">
    <property type="nucleotide sequence ID" value="XM_017014659.1"/>
</dbReference>
<dbReference type="RefSeq" id="XP_016870154.1">
    <property type="nucleotide sequence ID" value="XM_017014665.1"/>
</dbReference>
<dbReference type="RefSeq" id="XP_016870155.1">
    <property type="nucleotide sequence ID" value="XM_017014666.1"/>
</dbReference>
<dbReference type="RefSeq" id="XP_016870156.1">
    <property type="nucleotide sequence ID" value="XM_017014667.1"/>
</dbReference>
<dbReference type="BioGRID" id="119039">
    <property type="interactions" value="105"/>
</dbReference>
<dbReference type="FunCoup" id="Q969X2">
    <property type="interactions" value="539"/>
</dbReference>
<dbReference type="IntAct" id="Q969X2">
    <property type="interactions" value="102"/>
</dbReference>
<dbReference type="STRING" id="9606.ENSP00000362235"/>
<dbReference type="SwissLipids" id="SLP:000001366"/>
<dbReference type="CAZy" id="GT29">
    <property type="family name" value="Glycosyltransferase Family 29"/>
</dbReference>
<dbReference type="GlyCosmos" id="Q969X2">
    <property type="glycosylation" value="1 site, No reported glycans"/>
</dbReference>
<dbReference type="GlyGen" id="Q969X2">
    <property type="glycosylation" value="3 sites, 1 N-linked glycan (2 sites)"/>
</dbReference>
<dbReference type="iPTMnet" id="Q969X2"/>
<dbReference type="PhosphoSitePlus" id="Q969X2"/>
<dbReference type="BioMuta" id="ST6GALNAC6"/>
<dbReference type="DMDM" id="74751728"/>
<dbReference type="MassIVE" id="Q969X2"/>
<dbReference type="PaxDb" id="9606-ENSP00000362235"/>
<dbReference type="PeptideAtlas" id="Q969X2"/>
<dbReference type="ProteomicsDB" id="75868">
    <molecule id="Q969X2-1"/>
</dbReference>
<dbReference type="ProteomicsDB" id="75869">
    <molecule id="Q969X2-2"/>
</dbReference>
<dbReference type="Antibodypedia" id="17244">
    <property type="antibodies" value="94 antibodies from 21 providers"/>
</dbReference>
<dbReference type="DNASU" id="30815"/>
<dbReference type="Ensembl" id="ENST00000373141.5">
    <molecule id="Q969X2-2"/>
    <property type="protein sequence ID" value="ENSP00000362234.1"/>
    <property type="gene ID" value="ENSG00000160408.16"/>
</dbReference>
<dbReference type="Ensembl" id="ENST00000373142.5">
    <molecule id="Q969X2-3"/>
    <property type="protein sequence ID" value="ENSP00000362235.1"/>
    <property type="gene ID" value="ENSG00000160408.16"/>
</dbReference>
<dbReference type="Ensembl" id="ENST00000373144.7">
    <molecule id="Q969X2-2"/>
    <property type="protein sequence ID" value="ENSP00000362237.3"/>
    <property type="gene ID" value="ENSG00000160408.16"/>
</dbReference>
<dbReference type="Ensembl" id="ENST00000373146.6">
    <molecule id="Q969X2-1"/>
    <property type="protein sequence ID" value="ENSP00000362239.1"/>
    <property type="gene ID" value="ENSG00000160408.16"/>
</dbReference>
<dbReference type="Ensembl" id="ENST00000622357.5">
    <molecule id="Q969X2-2"/>
    <property type="protein sequence ID" value="ENSP00000477575.1"/>
    <property type="gene ID" value="ENSG00000160408.16"/>
</dbReference>
<dbReference type="GeneID" id="30815"/>
<dbReference type="KEGG" id="hsa:30815"/>
<dbReference type="MANE-Select" id="ENST00000373146.6">
    <property type="protein sequence ID" value="ENSP00000362239.1"/>
    <property type="RefSeq nucleotide sequence ID" value="NM_013443.5"/>
    <property type="RefSeq protein sequence ID" value="NP_038471.2"/>
</dbReference>
<dbReference type="UCSC" id="uc004bsn.3">
    <molecule id="Q969X2-1"/>
    <property type="organism name" value="human"/>
</dbReference>
<dbReference type="AGR" id="HGNC:23364"/>
<dbReference type="CTD" id="30815"/>
<dbReference type="DisGeNET" id="30815"/>
<dbReference type="GeneCards" id="ST6GALNAC6"/>
<dbReference type="HGNC" id="HGNC:23364">
    <property type="gene designation" value="ST6GALNAC6"/>
</dbReference>
<dbReference type="HPA" id="ENSG00000160408">
    <property type="expression patterns" value="Low tissue specificity"/>
</dbReference>
<dbReference type="MIM" id="610135">
    <property type="type" value="gene"/>
</dbReference>
<dbReference type="neXtProt" id="NX_Q969X2"/>
<dbReference type="OpenTargets" id="ENSG00000160408"/>
<dbReference type="OpenTargets" id="ENSG00000257524"/>
<dbReference type="PharmGKB" id="PA134891331"/>
<dbReference type="VEuPathDB" id="HostDB:ENSG00000160408"/>
<dbReference type="GeneTree" id="ENSGT00940000160114"/>
<dbReference type="HOGENOM" id="CLU_061099_3_0_1"/>
<dbReference type="InParanoid" id="Q969X2"/>
<dbReference type="OMA" id="KSMTLHC"/>
<dbReference type="OrthoDB" id="10264956at2759"/>
<dbReference type="PAN-GO" id="Q969X2">
    <property type="GO annotations" value="3 GO annotations based on evolutionary models"/>
</dbReference>
<dbReference type="PhylomeDB" id="Q969X2"/>
<dbReference type="TreeFam" id="TF323961"/>
<dbReference type="BRENDA" id="2.4.99.7">
    <property type="organism ID" value="2681"/>
</dbReference>
<dbReference type="PathwayCommons" id="Q969X2"/>
<dbReference type="Reactome" id="R-HSA-4085001">
    <property type="pathway name" value="Sialic acid metabolism"/>
</dbReference>
<dbReference type="Reactome" id="R-HSA-9037629">
    <property type="pathway name" value="Lewis blood group biosynthesis"/>
</dbReference>
<dbReference type="Reactome" id="R-HSA-9840309">
    <property type="pathway name" value="Glycosphingolipid biosynthesis"/>
</dbReference>
<dbReference type="SignaLink" id="Q969X2"/>
<dbReference type="BioGRID-ORCS" id="30815">
    <property type="hits" value="13 hits in 1153 CRISPR screens"/>
</dbReference>
<dbReference type="GeneWiki" id="ST6GALNAC6"/>
<dbReference type="GenomeRNAi" id="30815"/>
<dbReference type="Pharos" id="Q969X2">
    <property type="development level" value="Tbio"/>
</dbReference>
<dbReference type="PRO" id="PR:Q969X2"/>
<dbReference type="Proteomes" id="UP000005640">
    <property type="component" value="Chromosome 9"/>
</dbReference>
<dbReference type="RNAct" id="Q969X2">
    <property type="molecule type" value="protein"/>
</dbReference>
<dbReference type="Bgee" id="ENSG00000160408">
    <property type="expression patterns" value="Expressed in amygdala and 97 other cell types or tissues"/>
</dbReference>
<dbReference type="ExpressionAtlas" id="Q969X2">
    <property type="expression patterns" value="baseline and differential"/>
</dbReference>
<dbReference type="GO" id="GO:0005737">
    <property type="term" value="C:cytoplasm"/>
    <property type="evidence" value="ECO:0000250"/>
    <property type="project" value="BHF-UCL"/>
</dbReference>
<dbReference type="GO" id="GO:0000139">
    <property type="term" value="C:Golgi membrane"/>
    <property type="evidence" value="ECO:0000304"/>
    <property type="project" value="Reactome"/>
</dbReference>
<dbReference type="GO" id="GO:0016020">
    <property type="term" value="C:membrane"/>
    <property type="evidence" value="ECO:0000304"/>
    <property type="project" value="ProtInc"/>
</dbReference>
<dbReference type="GO" id="GO:0005886">
    <property type="term" value="C:plasma membrane"/>
    <property type="evidence" value="ECO:0000303"/>
    <property type="project" value="ProtInc"/>
</dbReference>
<dbReference type="GO" id="GO:0001665">
    <property type="term" value="F:alpha-N-acetylgalactosaminide alpha-2,6-sialyltransferase activity"/>
    <property type="evidence" value="ECO:0000250"/>
    <property type="project" value="BHF-UCL"/>
</dbReference>
<dbReference type="GO" id="GO:0008373">
    <property type="term" value="F:sialyltransferase activity"/>
    <property type="evidence" value="ECO:0000314"/>
    <property type="project" value="BHF-UCL"/>
</dbReference>
<dbReference type="GO" id="GO:0009988">
    <property type="term" value="P:cell-cell recognition"/>
    <property type="evidence" value="ECO:0000305"/>
    <property type="project" value="BHF-UCL"/>
</dbReference>
<dbReference type="GO" id="GO:0001574">
    <property type="term" value="P:ganglioside biosynthetic process"/>
    <property type="evidence" value="ECO:0000250"/>
    <property type="project" value="BHF-UCL"/>
</dbReference>
<dbReference type="GO" id="GO:0009100">
    <property type="term" value="P:glycoprotein metabolic process"/>
    <property type="evidence" value="ECO:0000314"/>
    <property type="project" value="BHF-UCL"/>
</dbReference>
<dbReference type="GO" id="GO:0006688">
    <property type="term" value="P:glycosphingolipid biosynthetic process"/>
    <property type="evidence" value="ECO:0000304"/>
    <property type="project" value="Reactome"/>
</dbReference>
<dbReference type="GO" id="GO:0006687">
    <property type="term" value="P:glycosphingolipid metabolic process"/>
    <property type="evidence" value="ECO:0000314"/>
    <property type="project" value="BHF-UCL"/>
</dbReference>
<dbReference type="GO" id="GO:0006677">
    <property type="term" value="P:glycosylceramide metabolic process"/>
    <property type="evidence" value="ECO:0000314"/>
    <property type="project" value="BHF-UCL"/>
</dbReference>
<dbReference type="GO" id="GO:0009312">
    <property type="term" value="P:oligosaccharide biosynthetic process"/>
    <property type="evidence" value="ECO:0000250"/>
    <property type="project" value="BHF-UCL"/>
</dbReference>
<dbReference type="GO" id="GO:0009311">
    <property type="term" value="P:oligosaccharide metabolic process"/>
    <property type="evidence" value="ECO:0000318"/>
    <property type="project" value="GO_Central"/>
</dbReference>
<dbReference type="GO" id="GO:0006486">
    <property type="term" value="P:protein glycosylation"/>
    <property type="evidence" value="ECO:0007669"/>
    <property type="project" value="InterPro"/>
</dbReference>
<dbReference type="CDD" id="cd23978">
    <property type="entry name" value="GT29_ST6GALNAC6"/>
    <property type="match status" value="1"/>
</dbReference>
<dbReference type="FunFam" id="3.90.1480.20:FF:000009">
    <property type="entry name" value="alpha-N-acetylgalactosaminide alpha-2,6-sialyltransferase 6 isoform X2"/>
    <property type="match status" value="1"/>
</dbReference>
<dbReference type="Gene3D" id="3.90.1480.20">
    <property type="entry name" value="Glycosyl transferase family 29"/>
    <property type="match status" value="1"/>
</dbReference>
<dbReference type="InterPro" id="IPR001675">
    <property type="entry name" value="Glyco_trans_29"/>
</dbReference>
<dbReference type="InterPro" id="IPR038578">
    <property type="entry name" value="GT29-like_sf"/>
</dbReference>
<dbReference type="PANTHER" id="PTHR45906">
    <property type="entry name" value="ALPHA-N-ACETYL-NEURAMINYL-2,3-BETA-GALACTOSYL-1, 3-N-ACETYL-GALACTOSAMINIDE ALPHA-2,6-SIALYLTRANSFERASE-LIKE"/>
    <property type="match status" value="1"/>
</dbReference>
<dbReference type="PANTHER" id="PTHR45906:SF6">
    <property type="entry name" value="ALPHA-N-ACETYLGALACTOSAMINIDE ALPHA-2,6-SIALYLTRANSFERASE 6"/>
    <property type="match status" value="1"/>
</dbReference>
<dbReference type="Pfam" id="PF00777">
    <property type="entry name" value="Glyco_transf_29"/>
    <property type="match status" value="1"/>
</dbReference>
<keyword id="KW-0025">Alternative splicing</keyword>
<keyword id="KW-1015">Disulfide bond</keyword>
<keyword id="KW-0325">Glycoprotein</keyword>
<keyword id="KW-0328">Glycosyltransferase</keyword>
<keyword id="KW-0333">Golgi apparatus</keyword>
<keyword id="KW-0443">Lipid metabolism</keyword>
<keyword id="KW-0472">Membrane</keyword>
<keyword id="KW-1267">Proteomics identification</keyword>
<keyword id="KW-1185">Reference proteome</keyword>
<keyword id="KW-0730">Sialic acid</keyword>
<keyword id="KW-0735">Signal-anchor</keyword>
<keyword id="KW-0808">Transferase</keyword>
<keyword id="KW-0812">Transmembrane</keyword>
<keyword id="KW-1133">Transmembrane helix</keyword>
<proteinExistence type="evidence at protein level"/>
<comment type="function">
    <text evidence="2 5 6">Transfers the sialyl group (N-acetyl-alpha-neuraminyl or NeuAc) from CMP-NeuAc onto glycoproteins and glycolipids, forming an alpha-2,6-linkage. Produces branched type disialyl structures by transfer of a sialyl group onto the GalNAc or GlcNAc residue inside backbone core chains having a terminal sialic acid with an alpha-2,3-linkage on Gal. ST6GalNAcVI prefers glycolipids to glycoproteins, predominantly catalyzing the biosynthesis of ganglioside GD1alpha from GM1b (PubMed:12668675, PubMed:17123352). Besides GMb1, MSGG and other glycolipids, it shows activity towards sialyl Lc4Cer generating disialyl Lc4Cer, which can lead to the synthesis of disialyl Lewis a (Le(a)), suggested to be a cancer-associated antigen (PubMed:12668675). Also has activity toward GD1a and GT1b, and can generate DSGG (disialylgalactosylgloboside) from MSGG (monosialylgalactosylgloboside) (By similarity).</text>
</comment>
<comment type="catalytic activity">
    <reaction evidence="5 6">
        <text>a ganglioside GM1b (d18:1(4E)) + CMP-N-acetyl-beta-neuraminate = a ganglioside GD1alpha (d18:1(4E)) + CMP + H(+)</text>
        <dbReference type="Rhea" id="RHEA:41968"/>
        <dbReference type="ChEBI" id="CHEBI:15378"/>
        <dbReference type="ChEBI" id="CHEBI:57812"/>
        <dbReference type="ChEBI" id="CHEBI:60377"/>
        <dbReference type="ChEBI" id="CHEBI:78568"/>
        <dbReference type="ChEBI" id="CHEBI:78569"/>
    </reaction>
    <physiologicalReaction direction="left-to-right" evidence="15 16">
        <dbReference type="Rhea" id="RHEA:41969"/>
    </physiologicalReaction>
</comment>
<comment type="catalytic activity">
    <reaction evidence="5 6">
        <text>N-acetyl-alpha-neuraminosyl-(2-&gt;3)-beta-D-galactosyl-(1-&gt;3)-N-acetyl-beta-D-glucosaminyl-(1-&gt;3)-beta-D-galactosyl-(1-&gt;4)-beta-D-glucosyl-(1&lt;-&gt;1')-N-acyl-sphing-4-enine + CMP-N-acetyl-beta-neuraminate = N-acetyl-alpha-neuraminosyl-(2-&gt;3)-beta-D-galactosyl-(1-&gt;3)-[N-acetyl-alpha-neuraminosyl-(2-&gt;6)]-N-acetyl-beta-D-glucosaminyl-(1-&gt;3)-beta-D-galactosyl-(1-&gt;4)-beta-D-glucosyl-(1&lt;-&gt;1')-N-acyl-sphing-4-enine + CMP + H(+)</text>
        <dbReference type="Rhea" id="RHEA:47884"/>
        <dbReference type="ChEBI" id="CHEBI:15378"/>
        <dbReference type="ChEBI" id="CHEBI:57812"/>
        <dbReference type="ChEBI" id="CHEBI:60377"/>
        <dbReference type="ChEBI" id="CHEBI:88073"/>
        <dbReference type="ChEBI" id="CHEBI:88079"/>
    </reaction>
    <physiologicalReaction direction="left-to-right" evidence="15 16">
        <dbReference type="Rhea" id="RHEA:47885"/>
    </physiologicalReaction>
</comment>
<comment type="catalytic activity">
    <reaction evidence="6">
        <text>a globoside MSGG + CMP-N-acetyl-beta-neuraminate = a globoside DSGG + CMP + H(+)</text>
        <dbReference type="Rhea" id="RHEA:56088"/>
        <dbReference type="ChEBI" id="CHEBI:15378"/>
        <dbReference type="ChEBI" id="CHEBI:57812"/>
        <dbReference type="ChEBI" id="CHEBI:60377"/>
        <dbReference type="ChEBI" id="CHEBI:140623"/>
        <dbReference type="ChEBI" id="CHEBI:140624"/>
    </reaction>
    <physiologicalReaction direction="left-to-right" evidence="16">
        <dbReference type="Rhea" id="RHEA:56089"/>
    </physiologicalReaction>
</comment>
<comment type="catalytic activity">
    <reaction evidence="2">
        <text>a ganglioside GD1a (d18:1(4E)) + CMP-N-acetyl-beta-neuraminate = a ganglioside GT1aalpha (d18:1(4E)) + CMP + H(+)</text>
        <dbReference type="Rhea" id="RHEA:41972"/>
        <dbReference type="ChEBI" id="CHEBI:15378"/>
        <dbReference type="ChEBI" id="CHEBI:57812"/>
        <dbReference type="ChEBI" id="CHEBI:60377"/>
        <dbReference type="ChEBI" id="CHEBI:78445"/>
        <dbReference type="ChEBI" id="CHEBI:78571"/>
    </reaction>
    <physiologicalReaction direction="left-to-right" evidence="2">
        <dbReference type="Rhea" id="RHEA:41973"/>
    </physiologicalReaction>
</comment>
<comment type="catalytic activity">
    <reaction evidence="2">
        <text>a ganglioside GT1b (d18:1(4E)) + CMP-N-acetyl-beta-neuraminate = a ganglioside GQ1balpha (d18:1(4E)) + CMP + H(+)</text>
        <dbReference type="Rhea" id="RHEA:41976"/>
        <dbReference type="ChEBI" id="CHEBI:15378"/>
        <dbReference type="ChEBI" id="CHEBI:57812"/>
        <dbReference type="ChEBI" id="CHEBI:60377"/>
        <dbReference type="ChEBI" id="CHEBI:78452"/>
        <dbReference type="ChEBI" id="CHEBI:78572"/>
    </reaction>
    <physiologicalReaction direction="left-to-right" evidence="2">
        <dbReference type="Rhea" id="RHEA:41977"/>
    </physiologicalReaction>
</comment>
<comment type="catalytic activity">
    <reaction evidence="6">
        <text>3-O-[alpha-Neu5Ac-(2-&gt;3)-beta-D-Gal-(1-&gt;3)-alpha-D-GalNAc]-L-Ser-[protein] + CMP-N-acetyl-beta-neuraminate = a 3-O-{alpha-Neu5Ac-(2-&gt;3)-beta-D-Gal-(1-&gt;3)-[alpha-Neu5Ac-(2-&gt;6)]-alpha-D-GalNAc}-L-seryl-[protein] + CMP + H(+)</text>
        <dbReference type="Rhea" id="RHEA:65280"/>
        <dbReference type="Rhea" id="RHEA-COMP:16760"/>
        <dbReference type="Rhea" id="RHEA-COMP:16761"/>
        <dbReference type="ChEBI" id="CHEBI:15378"/>
        <dbReference type="ChEBI" id="CHEBI:57812"/>
        <dbReference type="ChEBI" id="CHEBI:60377"/>
        <dbReference type="ChEBI" id="CHEBI:156395"/>
        <dbReference type="ChEBI" id="CHEBI:156397"/>
    </reaction>
    <physiologicalReaction direction="left-to-right" evidence="16">
        <dbReference type="Rhea" id="RHEA:65281"/>
    </physiologicalReaction>
</comment>
<comment type="catalytic activity">
    <reaction evidence="6">
        <text>3-O-[alpha-Neu5Ac-(2-&gt;3)-beta-D-Gal-(1-&gt;3)-alpha-D-GalNAc]-L-Thr-[protein] + CMP-N-acetyl-beta-neuraminate = a 3-O-{alpha-Neu5Ac-(2-&gt;3)-beta-D-Gal-(1-&gt;3)-[alpha-Neu5Ac-(2-&gt;6)]-alpha-D-GalNAc}-L-threonyl-[protein] + CMP + H(+)</text>
        <dbReference type="Rhea" id="RHEA:65284"/>
        <dbReference type="Rhea" id="RHEA-COMP:16762"/>
        <dbReference type="Rhea" id="RHEA-COMP:16763"/>
        <dbReference type="ChEBI" id="CHEBI:15378"/>
        <dbReference type="ChEBI" id="CHEBI:57812"/>
        <dbReference type="ChEBI" id="CHEBI:60377"/>
        <dbReference type="ChEBI" id="CHEBI:156396"/>
        <dbReference type="ChEBI" id="CHEBI:156398"/>
    </reaction>
    <physiologicalReaction direction="left-to-right" evidence="16">
        <dbReference type="Rhea" id="RHEA:65285"/>
    </physiologicalReaction>
</comment>
<comment type="biophysicochemical properties">
    <kinetics>
        <KM evidence="5">0.33 mM for GM1b</KM>
        <KM evidence="5">0.46 mM for sialyl Lc4Cer</KM>
    </kinetics>
</comment>
<comment type="interaction">
    <interactant intactId="EBI-949146">
        <id>Q969X2</id>
    </interactant>
    <interactant intactId="EBI-12109402">
        <id>Q86W74-2</id>
        <label>ANKRD46</label>
    </interactant>
    <organismsDiffer>false</organismsDiffer>
    <experiments>3</experiments>
</comment>
<comment type="interaction">
    <interactant intactId="EBI-949146">
        <id>Q969X2</id>
    </interactant>
    <interactant intactId="EBI-930964">
        <id>P54253</id>
        <label>ATXN1</label>
    </interactant>
    <organismsDiffer>false</organismsDiffer>
    <experiments>7</experiments>
</comment>
<comment type="interaction">
    <interactant intactId="EBI-949146">
        <id>Q969X2</id>
    </interactant>
    <interactant intactId="EBI-2830349">
        <id>Q7Z4F1</id>
        <label>LRP10</label>
    </interactant>
    <organismsDiffer>false</organismsDiffer>
    <experiments>3</experiments>
</comment>
<comment type="subcellular location">
    <subcellularLocation>
        <location evidence="1">Golgi apparatus membrane</location>
        <topology evidence="1">Single-pass type II membrane protein</topology>
    </subcellularLocation>
</comment>
<comment type="alternative products">
    <event type="alternative splicing"/>
    <isoform>
        <id>Q969X2-1</id>
        <name>1</name>
        <sequence type="displayed"/>
    </isoform>
    <isoform>
        <id>Q969X2-2</id>
        <name>2</name>
        <sequence type="described" ref="VSP_030359"/>
    </isoform>
    <isoform>
        <id>Q969X2-3</id>
        <name>3</name>
        <sequence type="described" ref="VSP_055722"/>
    </isoform>
</comment>
<comment type="tissue specificity">
    <text evidence="5 6">Expressed in kidney, in proximal tubule epithelial cells. Expressed in colon cell lines.</text>
</comment>
<comment type="induction">
    <text>Down-regulated in renal cancers.</text>
</comment>
<comment type="miscellaneous">
    <text evidence="17">The carbohydrate antigen disialyl Lewis a, which is at least partly synthesized by ST6GALNAC6, is a normal counterpart of sialyl Lewis a, better known as CA19-9, an antigen widely used as a serum marker for diagnosis of cancers in the digestive track. Disialyl Lewis a is predominantly expressed in non-malignant epithelial cells of the digestive organs, while sialyl Lewis a is preferentially expressed in cancers. Disialyl Lewis a in normal epithelial cells serves as a ligand for immunosuppressive receptors, such as SIGLEC7 and SIGLEC9, expressed on resident monocytes/macrophages and maintains immunological homeostasis of mucosal membranes in digestive organs. Sialyl Lewis a, as well as its positional isomer sialyl Lewis x, serves as a ligand for vascular cell adhesion molecule E-selectin and facilitates hematogenous metastasis through mediating adhesion of circulating cancer cells to vascular endothelium (PubMed:17760270).</text>
</comment>
<comment type="similarity">
    <text evidence="14">Belongs to the glycosyltransferase 29 family.</text>
</comment>
<comment type="sequence caution" evidence="14">
    <conflict type="erroneous gene model prediction">
        <sequence resource="EMBL-CDS" id="EAW87712"/>
    </conflict>
</comment>
<comment type="online information" name="Functional Glycomics Gateway - GTase">
    <link uri="http://www.functionalglycomics.org/glycomics/molecule/jsp/glycoEnzyme/viewGlycoEnzyme.jsp?gbpId=gt_hum_635"/>
    <text>ST6GalNAc VI</text>
</comment>
<sequence>MACSRPPSQCEPTSLPPGPPAGRRHLPLSRRRREMSSNKEQRSAVFVILFALITILILYSSNSANEVFHYGSLRGRSRRPVNLKKWSITDGYVPILGNKTLPSRCHQCVIVSSSSHLLGTKLGPEIERAECTIRMNDAPTTGYSADVGNKTTYRVVAHSSVFRVLRRPQEFVNRTPETVFIFWGPPSKMQKPQGSLVRVIQRAGLVFPNMEAYAVSPGRMRQFDDLFRGETGKDREKSHSWLSTGWFTMVIAVELCDHVHVYGMVPPNYCSQRPRLQRMPYHYYEPKGPDECVTYIQNEHSRKGNHHRFITEKRVFSSWAQLYGITFSHPSWT</sequence>
<feature type="chain" id="PRO_0000314795" description="Alpha-N-acetylgalactosaminide alpha-2,6-sialyltransferase 6">
    <location>
        <begin position="1"/>
        <end position="333"/>
    </location>
</feature>
<feature type="topological domain" description="Cytoplasmic" evidence="3">
    <location>
        <begin position="1"/>
        <end position="43"/>
    </location>
</feature>
<feature type="transmembrane region" description="Helical; Signal-anchor for type II membrane protein" evidence="3">
    <location>
        <begin position="44"/>
        <end position="64"/>
    </location>
</feature>
<feature type="topological domain" description="Lumenal" evidence="3">
    <location>
        <begin position="65"/>
        <end position="333"/>
    </location>
</feature>
<feature type="region of interest" description="Disordered" evidence="4">
    <location>
        <begin position="1"/>
        <end position="26"/>
    </location>
</feature>
<feature type="compositionally biased region" description="Polar residues" evidence="4">
    <location>
        <begin position="1"/>
        <end position="12"/>
    </location>
</feature>
<feature type="glycosylation site" description="N-linked (GlcNAc...) asparagine" evidence="3">
    <location>
        <position position="98"/>
    </location>
</feature>
<feature type="disulfide bond" evidence="1">
    <location>
        <begin position="108"/>
        <end position="256"/>
    </location>
</feature>
<feature type="splice variant" id="VSP_030359" description="In isoform 2." evidence="7 8 9 11 13">
    <location>
        <begin position="1"/>
        <end position="34"/>
    </location>
</feature>
<feature type="splice variant" id="VSP_055722" description="In isoform 3." evidence="10">
    <original>QRPRLQRMPYHYYEPKGPDECVTYIQNEHSRKGNHHRFITEKRVFSSWAQLYGITFSHPSWT</original>
    <variation>GPASSACPTTTTSPRGRTNVSPTSRMSTVARATTTASSPRKGSSHRGPSCMASPSPTPPGPRPPSLWDLRRVRGEAASAQPLGQGPSSGQSRLAGVSPSQSGP</variation>
    <location>
        <begin position="272"/>
        <end position="333"/>
    </location>
</feature>
<feature type="sequence conflict" description="In Ref. 8; BC036102." evidence="14" ref="8">
    <original>L</original>
    <variation>M</variation>
    <location>
        <position position="73"/>
    </location>
</feature>
<feature type="sequence conflict" description="In Ref. 8; BC036102." evidence="14" ref="8">
    <original>R</original>
    <variation>Q</variation>
    <location>
        <position position="174"/>
    </location>
</feature>
<feature type="sequence conflict" description="In Ref. 8; BC036102." evidence="14" ref="8">
    <original>R</original>
    <variation>Q</variation>
    <location>
        <position position="228"/>
    </location>
</feature>
<feature type="sequence conflict" description="In Ref. 3; BAB14715." evidence="14" ref="3">
    <original>M</original>
    <variation>T</variation>
    <location>
        <position position="249"/>
    </location>
</feature>
<protein>
    <recommendedName>
        <fullName>Alpha-N-acetylgalactosaminide alpha-2,6-sialyltransferase 6</fullName>
        <ecNumber evidence="5 6">2.4.99.-</ecNumber>
    </recommendedName>
    <alternativeName>
        <fullName>GalNAc alpha-2,6-sialyltransferase VI</fullName>
    </alternativeName>
    <alternativeName>
        <fullName evidence="7 12">ST6GalNAc VI</fullName>
        <shortName>ST6GalNAcVI</shortName>
        <shortName>hST6GalNAc VI</shortName>
    </alternativeName>
    <alternativeName>
        <fullName>Sialyltransferase 7F</fullName>
        <shortName>SIAT7-F</shortName>
    </alternativeName>
</protein>
<name>SIA7F_HUMAN</name>
<accession>Q969X2</accession>
<accession>B3KQ01</accession>
<accession>Q5T9C4</accession>
<accession>Q5T9C5</accession>
<accession>Q9H8A2</accession>
<accession>Q9ULB8</accession>
<evidence type="ECO:0000250" key="1"/>
<evidence type="ECO:0000250" key="2">
    <source>
        <dbReference type="UniProtKB" id="Q9JM95"/>
    </source>
</evidence>
<evidence type="ECO:0000255" key="3"/>
<evidence type="ECO:0000256" key="4">
    <source>
        <dbReference type="SAM" id="MobiDB-lite"/>
    </source>
</evidence>
<evidence type="ECO:0000269" key="5">
    <source>
    </source>
</evidence>
<evidence type="ECO:0000269" key="6">
    <source>
    </source>
</evidence>
<evidence type="ECO:0000303" key="7">
    <source>
    </source>
</evidence>
<evidence type="ECO:0000303" key="8">
    <source>
    </source>
</evidence>
<evidence type="ECO:0000303" key="9">
    <source>
    </source>
</evidence>
<evidence type="ECO:0000303" key="10">
    <source>
    </source>
</evidence>
<evidence type="ECO:0000303" key="11">
    <source>
    </source>
</evidence>
<evidence type="ECO:0000303" key="12">
    <source>
    </source>
</evidence>
<evidence type="ECO:0000303" key="13">
    <source ref="5"/>
</evidence>
<evidence type="ECO:0000305" key="14"/>
<evidence type="ECO:0000305" key="15">
    <source>
    </source>
</evidence>
<evidence type="ECO:0000305" key="16">
    <source>
    </source>
</evidence>
<evidence type="ECO:0000305" key="17">
    <source>
    </source>
</evidence>
<organism>
    <name type="scientific">Homo sapiens</name>
    <name type="common">Human</name>
    <dbReference type="NCBI Taxonomy" id="9606"/>
    <lineage>
        <taxon>Eukaryota</taxon>
        <taxon>Metazoa</taxon>
        <taxon>Chordata</taxon>
        <taxon>Craniata</taxon>
        <taxon>Vertebrata</taxon>
        <taxon>Euteleostomi</taxon>
        <taxon>Mammalia</taxon>
        <taxon>Eutheria</taxon>
        <taxon>Euarchontoglires</taxon>
        <taxon>Primates</taxon>
        <taxon>Haplorrhini</taxon>
        <taxon>Catarrhini</taxon>
        <taxon>Hominidae</taxon>
        <taxon>Homo</taxon>
    </lineage>
</organism>
<reference key="1">
    <citation type="journal article" date="2003" name="J. Biol. Chem.">
        <title>Synthesis of disialyl Lewis a (Le(a)) structure in colon cancer cell lines by a sialyltransferase, ST6GalNAc VI, responsible for the synthesis of alpha-series gangliosides.</title>
        <authorList>
            <person name="Tsuchida A."/>
            <person name="Okajima T."/>
            <person name="Furukawa K."/>
            <person name="Ando T."/>
            <person name="Ishida H."/>
            <person name="Yoshida A."/>
            <person name="Nakamura Y."/>
            <person name="Kannagi R."/>
            <person name="Kiso M."/>
            <person name="Furukawa K."/>
        </authorList>
    </citation>
    <scope>NUCLEOTIDE SEQUENCE [MRNA] (ISOFORM 2)</scope>
    <scope>FUNCTION</scope>
    <scope>CATALYTIC ACTIVITY</scope>
    <scope>BIOPHYSICOCHEMICAL PROPERTIES</scope>
    <scope>TISSUE SPECIFICITY</scope>
</reference>
<reference key="2">
    <citation type="journal article" date="2005" name="Glycobiology">
        <title>The animal sialyltransferases and sialyltransferase-related genes: a phylogenetic approach.</title>
        <authorList>
            <person name="Harduin-Lepers A."/>
            <person name="Mollicone R."/>
            <person name="Delannoy P."/>
            <person name="Oriol R."/>
        </authorList>
    </citation>
    <scope>NUCLEOTIDE SEQUENCE [MRNA] (ISOFORM 2)</scope>
</reference>
<reference key="3">
    <citation type="journal article" date="2003" name="Genome Res.">
        <title>The secreted protein discovery initiative (SPDI), a large-scale effort to identify novel human secreted and transmembrane proteins: a bioinformatics assessment.</title>
        <authorList>
            <person name="Clark H.F."/>
            <person name="Gurney A.L."/>
            <person name="Abaya E."/>
            <person name="Baker K."/>
            <person name="Baldwin D.T."/>
            <person name="Brush J."/>
            <person name="Chen J."/>
            <person name="Chow B."/>
            <person name="Chui C."/>
            <person name="Crowley C."/>
            <person name="Currell B."/>
            <person name="Deuel B."/>
            <person name="Dowd P."/>
            <person name="Eaton D."/>
            <person name="Foster J.S."/>
            <person name="Grimaldi C."/>
            <person name="Gu Q."/>
            <person name="Hass P.E."/>
            <person name="Heldens S."/>
            <person name="Huang A."/>
            <person name="Kim H.S."/>
            <person name="Klimowski L."/>
            <person name="Jin Y."/>
            <person name="Johnson S."/>
            <person name="Lee J."/>
            <person name="Lewis L."/>
            <person name="Liao D."/>
            <person name="Mark M.R."/>
            <person name="Robbie E."/>
            <person name="Sanchez C."/>
            <person name="Schoenfeld J."/>
            <person name="Seshagiri S."/>
            <person name="Simmons L."/>
            <person name="Singh J."/>
            <person name="Smith V."/>
            <person name="Stinson J."/>
            <person name="Vagts A."/>
            <person name="Vandlen R.L."/>
            <person name="Watanabe C."/>
            <person name="Wieand D."/>
            <person name="Woods K."/>
            <person name="Xie M.-H."/>
            <person name="Yansura D.G."/>
            <person name="Yi S."/>
            <person name="Yu G."/>
            <person name="Yuan J."/>
            <person name="Zhang M."/>
            <person name="Zhang Z."/>
            <person name="Goddard A.D."/>
            <person name="Wood W.I."/>
            <person name="Godowski P.J."/>
            <person name="Gray A.M."/>
        </authorList>
    </citation>
    <scope>NUCLEOTIDE SEQUENCE [LARGE SCALE MRNA] (ISOFORM 2)</scope>
</reference>
<reference key="4">
    <citation type="journal article" date="2004" name="Nat. Genet.">
        <title>Complete sequencing and characterization of 21,243 full-length human cDNAs.</title>
        <authorList>
            <person name="Ota T."/>
            <person name="Suzuki Y."/>
            <person name="Nishikawa T."/>
            <person name="Otsuki T."/>
            <person name="Sugiyama T."/>
            <person name="Irie R."/>
            <person name="Wakamatsu A."/>
            <person name="Hayashi K."/>
            <person name="Sato H."/>
            <person name="Nagai K."/>
            <person name="Kimura K."/>
            <person name="Makita H."/>
            <person name="Sekine M."/>
            <person name="Obayashi M."/>
            <person name="Nishi T."/>
            <person name="Shibahara T."/>
            <person name="Tanaka T."/>
            <person name="Ishii S."/>
            <person name="Yamamoto J."/>
            <person name="Saito K."/>
            <person name="Kawai Y."/>
            <person name="Isono Y."/>
            <person name="Nakamura Y."/>
            <person name="Nagahari K."/>
            <person name="Murakami K."/>
            <person name="Yasuda T."/>
            <person name="Iwayanagi T."/>
            <person name="Wagatsuma M."/>
            <person name="Shiratori A."/>
            <person name="Sudo H."/>
            <person name="Hosoiri T."/>
            <person name="Kaku Y."/>
            <person name="Kodaira H."/>
            <person name="Kondo H."/>
            <person name="Sugawara M."/>
            <person name="Takahashi M."/>
            <person name="Kanda K."/>
            <person name="Yokoi T."/>
            <person name="Furuya T."/>
            <person name="Kikkawa E."/>
            <person name="Omura Y."/>
            <person name="Abe K."/>
            <person name="Kamihara K."/>
            <person name="Katsuta N."/>
            <person name="Sato K."/>
            <person name="Tanikawa M."/>
            <person name="Yamazaki M."/>
            <person name="Ninomiya K."/>
            <person name="Ishibashi T."/>
            <person name="Yamashita H."/>
            <person name="Murakawa K."/>
            <person name="Fujimori K."/>
            <person name="Tanai H."/>
            <person name="Kimata M."/>
            <person name="Watanabe M."/>
            <person name="Hiraoka S."/>
            <person name="Chiba Y."/>
            <person name="Ishida S."/>
            <person name="Ono Y."/>
            <person name="Takiguchi S."/>
            <person name="Watanabe S."/>
            <person name="Yosida M."/>
            <person name="Hotuta T."/>
            <person name="Kusano J."/>
            <person name="Kanehori K."/>
            <person name="Takahashi-Fujii A."/>
            <person name="Hara H."/>
            <person name="Tanase T.-O."/>
            <person name="Nomura Y."/>
            <person name="Togiya S."/>
            <person name="Komai F."/>
            <person name="Hara R."/>
            <person name="Takeuchi K."/>
            <person name="Arita M."/>
            <person name="Imose N."/>
            <person name="Musashino K."/>
            <person name="Yuuki H."/>
            <person name="Oshima A."/>
            <person name="Sasaki N."/>
            <person name="Aotsuka S."/>
            <person name="Yoshikawa Y."/>
            <person name="Matsunawa H."/>
            <person name="Ichihara T."/>
            <person name="Shiohata N."/>
            <person name="Sano S."/>
            <person name="Moriya S."/>
            <person name="Momiyama H."/>
            <person name="Satoh N."/>
            <person name="Takami S."/>
            <person name="Terashima Y."/>
            <person name="Suzuki O."/>
            <person name="Nakagawa S."/>
            <person name="Senoh A."/>
            <person name="Mizoguchi H."/>
            <person name="Goto Y."/>
            <person name="Shimizu F."/>
            <person name="Wakebe H."/>
            <person name="Hishigaki H."/>
            <person name="Watanabe T."/>
            <person name="Sugiyama A."/>
            <person name="Takemoto M."/>
            <person name="Kawakami B."/>
            <person name="Yamazaki M."/>
            <person name="Watanabe K."/>
            <person name="Kumagai A."/>
            <person name="Itakura S."/>
            <person name="Fukuzumi Y."/>
            <person name="Fujimori Y."/>
            <person name="Komiyama M."/>
            <person name="Tashiro H."/>
            <person name="Tanigami A."/>
            <person name="Fujiwara T."/>
            <person name="Ono T."/>
            <person name="Yamada K."/>
            <person name="Fujii Y."/>
            <person name="Ozaki K."/>
            <person name="Hirao M."/>
            <person name="Ohmori Y."/>
            <person name="Kawabata A."/>
            <person name="Hikiji T."/>
            <person name="Kobatake N."/>
            <person name="Inagaki H."/>
            <person name="Ikema Y."/>
            <person name="Okamoto S."/>
            <person name="Okitani R."/>
            <person name="Kawakami T."/>
            <person name="Noguchi S."/>
            <person name="Itoh T."/>
            <person name="Shigeta K."/>
            <person name="Senba T."/>
            <person name="Matsumura K."/>
            <person name="Nakajima Y."/>
            <person name="Mizuno T."/>
            <person name="Morinaga M."/>
            <person name="Sasaki M."/>
            <person name="Togashi T."/>
            <person name="Oyama M."/>
            <person name="Hata H."/>
            <person name="Watanabe M."/>
            <person name="Komatsu T."/>
            <person name="Mizushima-Sugano J."/>
            <person name="Satoh T."/>
            <person name="Shirai Y."/>
            <person name="Takahashi Y."/>
            <person name="Nakagawa K."/>
            <person name="Okumura K."/>
            <person name="Nagase T."/>
            <person name="Nomura N."/>
            <person name="Kikuchi H."/>
            <person name="Masuho Y."/>
            <person name="Yamashita R."/>
            <person name="Nakai K."/>
            <person name="Yada T."/>
            <person name="Nakamura Y."/>
            <person name="Ohara O."/>
            <person name="Isogai T."/>
            <person name="Sugano S."/>
        </authorList>
    </citation>
    <scope>NUCLEOTIDE SEQUENCE [LARGE SCALE MRNA] (ISOFORMS 1 AND 2)</scope>
    <source>
        <tissue>Small intestine</tissue>
        <tissue>Thyroid</tissue>
    </source>
</reference>
<reference key="5">
    <citation type="submission" date="2004-06" db="EMBL/GenBank/DDBJ databases">
        <title>Cloning of human full open reading frames in Gateway(TM) system entry vector (pDONR201).</title>
        <authorList>
            <person name="Ebert L."/>
            <person name="Schick M."/>
            <person name="Neubert P."/>
            <person name="Schatten R."/>
            <person name="Henze S."/>
            <person name="Korn B."/>
        </authorList>
    </citation>
    <scope>NUCLEOTIDE SEQUENCE [LARGE SCALE MRNA] (ISOFORM 2)</scope>
</reference>
<reference key="6">
    <citation type="journal article" date="2004" name="Nature">
        <title>DNA sequence and analysis of human chromosome 9.</title>
        <authorList>
            <person name="Humphray S.J."/>
            <person name="Oliver K."/>
            <person name="Hunt A.R."/>
            <person name="Plumb R.W."/>
            <person name="Loveland J.E."/>
            <person name="Howe K.L."/>
            <person name="Andrews T.D."/>
            <person name="Searle S."/>
            <person name="Hunt S.E."/>
            <person name="Scott C.E."/>
            <person name="Jones M.C."/>
            <person name="Ainscough R."/>
            <person name="Almeida J.P."/>
            <person name="Ambrose K.D."/>
            <person name="Ashwell R.I.S."/>
            <person name="Babbage A.K."/>
            <person name="Babbage S."/>
            <person name="Bagguley C.L."/>
            <person name="Bailey J."/>
            <person name="Banerjee R."/>
            <person name="Barker D.J."/>
            <person name="Barlow K.F."/>
            <person name="Bates K."/>
            <person name="Beasley H."/>
            <person name="Beasley O."/>
            <person name="Bird C.P."/>
            <person name="Bray-Allen S."/>
            <person name="Brown A.J."/>
            <person name="Brown J.Y."/>
            <person name="Burford D."/>
            <person name="Burrill W."/>
            <person name="Burton J."/>
            <person name="Carder C."/>
            <person name="Carter N.P."/>
            <person name="Chapman J.C."/>
            <person name="Chen Y."/>
            <person name="Clarke G."/>
            <person name="Clark S.Y."/>
            <person name="Clee C.M."/>
            <person name="Clegg S."/>
            <person name="Collier R.E."/>
            <person name="Corby N."/>
            <person name="Crosier M."/>
            <person name="Cummings A.T."/>
            <person name="Davies J."/>
            <person name="Dhami P."/>
            <person name="Dunn M."/>
            <person name="Dutta I."/>
            <person name="Dyer L.W."/>
            <person name="Earthrowl M.E."/>
            <person name="Faulkner L."/>
            <person name="Fleming C.J."/>
            <person name="Frankish A."/>
            <person name="Frankland J.A."/>
            <person name="French L."/>
            <person name="Fricker D.G."/>
            <person name="Garner P."/>
            <person name="Garnett J."/>
            <person name="Ghori J."/>
            <person name="Gilbert J.G.R."/>
            <person name="Glison C."/>
            <person name="Grafham D.V."/>
            <person name="Gribble S."/>
            <person name="Griffiths C."/>
            <person name="Griffiths-Jones S."/>
            <person name="Grocock R."/>
            <person name="Guy J."/>
            <person name="Hall R.E."/>
            <person name="Hammond S."/>
            <person name="Harley J.L."/>
            <person name="Harrison E.S.I."/>
            <person name="Hart E.A."/>
            <person name="Heath P.D."/>
            <person name="Henderson C.D."/>
            <person name="Hopkins B.L."/>
            <person name="Howard P.J."/>
            <person name="Howden P.J."/>
            <person name="Huckle E."/>
            <person name="Johnson C."/>
            <person name="Johnson D."/>
            <person name="Joy A.A."/>
            <person name="Kay M."/>
            <person name="Keenan S."/>
            <person name="Kershaw J.K."/>
            <person name="Kimberley A.M."/>
            <person name="King A."/>
            <person name="Knights A."/>
            <person name="Laird G.K."/>
            <person name="Langford C."/>
            <person name="Lawlor S."/>
            <person name="Leongamornlert D.A."/>
            <person name="Leversha M."/>
            <person name="Lloyd C."/>
            <person name="Lloyd D.M."/>
            <person name="Lovell J."/>
            <person name="Martin S."/>
            <person name="Mashreghi-Mohammadi M."/>
            <person name="Matthews L."/>
            <person name="McLaren S."/>
            <person name="McLay K.E."/>
            <person name="McMurray A."/>
            <person name="Milne S."/>
            <person name="Nickerson T."/>
            <person name="Nisbett J."/>
            <person name="Nordsiek G."/>
            <person name="Pearce A.V."/>
            <person name="Peck A.I."/>
            <person name="Porter K.M."/>
            <person name="Pandian R."/>
            <person name="Pelan S."/>
            <person name="Phillimore B."/>
            <person name="Povey S."/>
            <person name="Ramsey Y."/>
            <person name="Rand V."/>
            <person name="Scharfe M."/>
            <person name="Sehra H.K."/>
            <person name="Shownkeen R."/>
            <person name="Sims S.K."/>
            <person name="Skuce C.D."/>
            <person name="Smith M."/>
            <person name="Steward C.A."/>
            <person name="Swarbreck D."/>
            <person name="Sycamore N."/>
            <person name="Tester J."/>
            <person name="Thorpe A."/>
            <person name="Tracey A."/>
            <person name="Tromans A."/>
            <person name="Thomas D.W."/>
            <person name="Wall M."/>
            <person name="Wallis J.M."/>
            <person name="West A.P."/>
            <person name="Whitehead S.L."/>
            <person name="Willey D.L."/>
            <person name="Williams S.A."/>
            <person name="Wilming L."/>
            <person name="Wray P.W."/>
            <person name="Young L."/>
            <person name="Ashurst J.L."/>
            <person name="Coulson A."/>
            <person name="Blocker H."/>
            <person name="Durbin R.M."/>
            <person name="Sulston J.E."/>
            <person name="Hubbard T."/>
            <person name="Jackson M.J."/>
            <person name="Bentley D.R."/>
            <person name="Beck S."/>
            <person name="Rogers J."/>
            <person name="Dunham I."/>
        </authorList>
    </citation>
    <scope>NUCLEOTIDE SEQUENCE [LARGE SCALE GENOMIC DNA]</scope>
</reference>
<reference key="7">
    <citation type="submission" date="2005-07" db="EMBL/GenBank/DDBJ databases">
        <authorList>
            <person name="Mural R.J."/>
            <person name="Istrail S."/>
            <person name="Sutton G.G."/>
            <person name="Florea L."/>
            <person name="Halpern A.L."/>
            <person name="Mobarry C.M."/>
            <person name="Lippert R."/>
            <person name="Walenz B."/>
            <person name="Shatkay H."/>
            <person name="Dew I."/>
            <person name="Miller J.R."/>
            <person name="Flanigan M.J."/>
            <person name="Edwards N.J."/>
            <person name="Bolanos R."/>
            <person name="Fasulo D."/>
            <person name="Halldorsson B.V."/>
            <person name="Hannenhalli S."/>
            <person name="Turner R."/>
            <person name="Yooseph S."/>
            <person name="Lu F."/>
            <person name="Nusskern D.R."/>
            <person name="Shue B.C."/>
            <person name="Zheng X.H."/>
            <person name="Zhong F."/>
            <person name="Delcher A.L."/>
            <person name="Huson D.H."/>
            <person name="Kravitz S.A."/>
            <person name="Mouchard L."/>
            <person name="Reinert K."/>
            <person name="Remington K.A."/>
            <person name="Clark A.G."/>
            <person name="Waterman M.S."/>
            <person name="Eichler E.E."/>
            <person name="Adams M.D."/>
            <person name="Hunkapiller M.W."/>
            <person name="Myers E.W."/>
            <person name="Venter J.C."/>
        </authorList>
    </citation>
    <scope>NUCLEOTIDE SEQUENCE [LARGE SCALE GENOMIC DNA]</scope>
</reference>
<reference key="8">
    <citation type="journal article" date="2004" name="Genome Res.">
        <title>The status, quality, and expansion of the NIH full-length cDNA project: the Mammalian Gene Collection (MGC).</title>
        <authorList>
            <consortium name="The MGC Project Team"/>
        </authorList>
    </citation>
    <scope>NUCLEOTIDE SEQUENCE [LARGE SCALE MRNA] (ISOFORMS 1 AND 3)</scope>
    <source>
        <tissue>Brain</tissue>
        <tissue>Muscle</tissue>
    </source>
</reference>
<reference key="9">
    <citation type="journal article" date="2006" name="Glycobiology">
        <title>Identification of linkage-specific sequence motifs in sialyltransferases.</title>
        <authorList>
            <person name="Patel R.Y."/>
            <person name="Balaji P.V."/>
        </authorList>
    </citation>
    <scope>IDENTIFICATION</scope>
</reference>
<reference key="10">
    <citation type="journal article" date="2007" name="Biochem. J.">
        <title>Identification and expression of a sialyltransferase responsible for the synthesis of disialylgalactosylgloboside in normal and malignant kidney cells: downregulation of ST6GalNAc VI in renal cancers.</title>
        <authorList>
            <person name="Senda M."/>
            <person name="Ito A."/>
            <person name="Tsuchida A."/>
            <person name="Hagiwara T."/>
            <person name="Kaneda T."/>
            <person name="Nakamura Y."/>
            <person name="Kasama K."/>
            <person name="Kiso M."/>
            <person name="Yoshikawa K."/>
            <person name="Katagiri Y."/>
            <person name="Ono Y."/>
            <person name="Ogiso M."/>
            <person name="Urano T."/>
            <person name="Furukawa K."/>
            <person name="Oshima S."/>
            <person name="Furukawa K."/>
        </authorList>
    </citation>
    <scope>FUNCTION</scope>
    <scope>CATALYTIC ACTIVITY</scope>
    <scope>TISSUE SPECIFICITY</scope>
</reference>
<reference key="11">
    <citation type="journal article" date="2007" name="Chang Gung Med. J.">
        <title>Carbohydrate antigen sialyl Lewis a - its pathophysiological significance and induction mechanism in cancer progression.</title>
        <authorList>
            <person name="Kannagi R."/>
        </authorList>
    </citation>
    <scope>REVIEW ON SIALYL LEWIS ANTIGENS</scope>
</reference>
<gene>
    <name type="primary">ST6GALNAC6</name>
    <name type="synonym">SIAT7F</name>
    <name type="ORF">UNQ708/PRO1359</name>
</gene>